<geneLocation type="chloroplast"/>
<organism>
    <name type="scientific">Tetradesmus obliquus</name>
    <name type="common">Green alga</name>
    <name type="synonym">Acutodesmus obliquus</name>
    <dbReference type="NCBI Taxonomy" id="3088"/>
    <lineage>
        <taxon>Eukaryota</taxon>
        <taxon>Viridiplantae</taxon>
        <taxon>Chlorophyta</taxon>
        <taxon>core chlorophytes</taxon>
        <taxon>Chlorophyceae</taxon>
        <taxon>CS clade</taxon>
        <taxon>Sphaeropleales</taxon>
        <taxon>Scenedesmaceae</taxon>
        <taxon>Tetradesmus</taxon>
    </lineage>
</organism>
<evidence type="ECO:0000305" key="1"/>
<reference key="1">
    <citation type="journal article" date="2006" name="BMC Evol. Biol.">
        <title>The complete chloroplast genome sequence of the chlorophycean green alga Scenedesmus obliquus reveals a compact gene organization and a biased distribution of genes on the two DNA strands.</title>
        <authorList>
            <person name="de Cambiaire J.-C."/>
            <person name="Otis C."/>
            <person name="Lemieux C."/>
            <person name="Turmel M."/>
        </authorList>
    </citation>
    <scope>NUCLEOTIDE SEQUENCE [LARGE SCALE GENOMIC DNA]</scope>
    <source>
        <strain>UTEX 393</strain>
    </source>
</reference>
<feature type="chain" id="PRO_0000352156" description="Small ribosomal subunit protein uS2cz">
    <location>
        <begin position="1"/>
        <end position="532"/>
    </location>
</feature>
<feature type="domain" description="TRAM 1">
    <location>
        <begin position="38"/>
        <end position="97"/>
    </location>
</feature>
<feature type="domain" description="TRAM 2">
    <location>
        <begin position="127"/>
        <end position="186"/>
    </location>
</feature>
<feature type="domain" description="TRAM 3">
    <location>
        <begin position="197"/>
        <end position="260"/>
    </location>
</feature>
<feature type="region of interest" description="N-terminal extension">
    <location>
        <begin position="1"/>
        <end position="271"/>
    </location>
</feature>
<gene>
    <name type="primary">rps2-1</name>
    <name type="synonym">rps2a</name>
</gene>
<proteinExistence type="inferred from homology"/>
<keyword id="KW-0150">Chloroplast</keyword>
<keyword id="KW-0934">Plastid</keyword>
<keyword id="KW-0677">Repeat</keyword>
<keyword id="KW-0687">Ribonucleoprotein</keyword>
<keyword id="KW-0689">Ribosomal protein</keyword>
<dbReference type="EMBL" id="DQ396875">
    <property type="protein sequence ID" value="ABD48248.1"/>
    <property type="molecule type" value="Genomic_DNA"/>
</dbReference>
<dbReference type="RefSeq" id="YP_635965.1">
    <property type="nucleotide sequence ID" value="NC_008101.1"/>
</dbReference>
<dbReference type="GeneID" id="4099748"/>
<dbReference type="GO" id="GO:0009507">
    <property type="term" value="C:chloroplast"/>
    <property type="evidence" value="ECO:0007669"/>
    <property type="project" value="UniProtKB-SubCell"/>
</dbReference>
<dbReference type="GO" id="GO:0005763">
    <property type="term" value="C:mitochondrial small ribosomal subunit"/>
    <property type="evidence" value="ECO:0007669"/>
    <property type="project" value="TreeGrafter"/>
</dbReference>
<dbReference type="GO" id="GO:0003735">
    <property type="term" value="F:structural constituent of ribosome"/>
    <property type="evidence" value="ECO:0007669"/>
    <property type="project" value="InterPro"/>
</dbReference>
<dbReference type="GO" id="GO:0006412">
    <property type="term" value="P:translation"/>
    <property type="evidence" value="ECO:0007669"/>
    <property type="project" value="UniProtKB-UniRule"/>
</dbReference>
<dbReference type="CDD" id="cd01425">
    <property type="entry name" value="RPS2"/>
    <property type="match status" value="1"/>
</dbReference>
<dbReference type="Gene3D" id="3.40.50.10490">
    <property type="entry name" value="Glucose-6-phosphate isomerase like protein, domain 1"/>
    <property type="match status" value="1"/>
</dbReference>
<dbReference type="Gene3D" id="2.40.50.140">
    <property type="entry name" value="Nucleic acid-binding proteins"/>
    <property type="match status" value="2"/>
</dbReference>
<dbReference type="HAMAP" id="MF_00291_B">
    <property type="entry name" value="Ribosomal_uS2_B"/>
    <property type="match status" value="1"/>
</dbReference>
<dbReference type="InterPro" id="IPR012340">
    <property type="entry name" value="NA-bd_OB-fold"/>
</dbReference>
<dbReference type="InterPro" id="IPR001865">
    <property type="entry name" value="Ribosomal_uS2"/>
</dbReference>
<dbReference type="InterPro" id="IPR005706">
    <property type="entry name" value="Ribosomal_uS2_bac/mit/plastid"/>
</dbReference>
<dbReference type="InterPro" id="IPR023591">
    <property type="entry name" value="Ribosomal_uS2_flav_dom_sf"/>
</dbReference>
<dbReference type="InterPro" id="IPR002792">
    <property type="entry name" value="TRAM_dom"/>
</dbReference>
<dbReference type="NCBIfam" id="TIGR01011">
    <property type="entry name" value="rpsB_bact"/>
    <property type="match status" value="1"/>
</dbReference>
<dbReference type="PANTHER" id="PTHR12534">
    <property type="entry name" value="30S RIBOSOMAL PROTEIN S2 PROKARYOTIC AND ORGANELLAR"/>
    <property type="match status" value="1"/>
</dbReference>
<dbReference type="PANTHER" id="PTHR12534:SF0">
    <property type="entry name" value="SMALL RIBOSOMAL SUBUNIT PROTEIN US2M"/>
    <property type="match status" value="1"/>
</dbReference>
<dbReference type="Pfam" id="PF00318">
    <property type="entry name" value="Ribosomal_S2"/>
    <property type="match status" value="1"/>
</dbReference>
<dbReference type="Pfam" id="PF01938">
    <property type="entry name" value="TRAM"/>
    <property type="match status" value="2"/>
</dbReference>
<dbReference type="SUPFAM" id="SSF50249">
    <property type="entry name" value="Nucleic acid-binding proteins"/>
    <property type="match status" value="2"/>
</dbReference>
<dbReference type="SUPFAM" id="SSF52313">
    <property type="entry name" value="Ribosomal protein S2"/>
    <property type="match status" value="1"/>
</dbReference>
<dbReference type="PROSITE" id="PS50926">
    <property type="entry name" value="TRAM"/>
    <property type="match status" value="2"/>
</dbReference>
<protein>
    <recommendedName>
        <fullName evidence="1">Small ribosomal subunit protein uS2cz</fullName>
    </recommendedName>
    <alternativeName>
        <fullName>30S ribosomal protein S2, chloroplastic 1</fullName>
    </alternativeName>
</protein>
<comment type="subcellular location">
    <subcellularLocation>
        <location>Plastid</location>
        <location>Chloroplast</location>
    </subcellularLocation>
</comment>
<comment type="similarity">
    <text evidence="1">Belongs to the universal ribosomal protein uS2 family.</text>
</comment>
<name>RR2A_TETOB</name>
<sequence length="532" mass="60229">METLEKNFKKEKSVFSAAKKKKNLSFAKNEKTTTLKDALQAGDILTVKITALGSKNIGVAELKNGYTVLVPNTKCGDKVQVKVEKIFLGKGTNSILNQKIKYVVARVDNSGTKTSNFEKTSNSLKFDFKVGQKFRVTIAKKGPKNSGLVPVAKNFLFIVPNTKVGENIVVEIQKIKQNYAFAKPILSKQMNVVQENNQMIGQQFHIVIPSSAKTIANSFVVKLNGQFVFVKKSLGVQLEDTVKIQIQKSTGTFALAKILKISPISSKEKKAMVKETVQKMIQSSMHFGEKAIRCNANMRKYIWYRKKGLGMYTNSKNTFVSIKETKKPMVKRGRHVLNVLKTQRCFAEALKQLAKYAAKGKTFLFVGTKKPAASLVAKTALLSNTSFFVNTRWLGGMLTNWKTILKSISQIRPILKQKQKILQKILEKREKIQRRLFNKVYLLRKKSQKFMIKGKYLIQQILRSKNFLIEKSQKFIQTKNALFSANALLLNASKNLKMKKIQILKQIQQLEFAAVEILKQKQPIKSFNSIKS</sequence>
<accession>Q1KVV9</accession>